<comment type="function">
    <text evidence="2">DNA-binding protein involved in cell cycle control. May act as a transcription activator. Plays a role in pre-mRNA splicing as core component of precatalytic, catalytic and postcatalytic spliceosomal complexes. Component of the PRP19-CDC5L complex that forms an integral part of the spliceosome and is required for activating pre-mRNA splicing. The PRP19-CDC5L complex may also play a role in the response to DNA damage (DDR). As a component of the minor spliceosome, involved in the splicing of U12-type introns in pre-mRNAs (By similarity).</text>
</comment>
<comment type="subunit">
    <text evidence="1 2">Homodimer. Interacts with DAPK3 (By similarity). Component of the precatalytic, catalytic and postcatalytic spliceosome complexes (By similarity). Part of a spliceosomal 'core' complex consisting of CDC5L, PLRG1, SPF27, CCAP1, CCAP3 and CCAP6. Interacts with PLRG1, Lodestar/TTF2, and NIPP1/PPP1R8. Component of the minor spliceosome, which splices U12-type introns. Within this complex, interacts with SCNM1 (By similarity). Component of the PRP19-CDC5L splicing complex composed of a core complex comprising a homotetramer of PRPF19, CDC5L, PLRG1 and BCAS2, and at least three less stably associated proteins CTNNBL1, CWC15 and HSPA8. Interacts (via its C-terminus) directly in the complex with PRPF19 and BCAS2. Interacts (via its C-terminus) directly with PRGL1 (via its WD40 repeat domain); the interaction is required for mRNA splicing but not for spliceosome assembly. Also interacts with CTNNBL1. Interacts with PRPF19 (via N-terminus) (By similarity). Interacts with USB1 (By similarity). Interacts with DDX41 (By similarity).</text>
</comment>
<comment type="subcellular location">
    <subcellularLocation>
        <location evidence="2 4">Nucleus</location>
    </subcellularLocation>
    <subcellularLocation>
        <location evidence="2 4">Nucleus speckle</location>
    </subcellularLocation>
    <subcellularLocation>
        <location evidence="2">Cytoplasm</location>
    </subcellularLocation>
    <text evidence="2">May shuttle between cytoplasm and nucleus.</text>
</comment>
<comment type="PTM">
    <text evidence="2">Phosphorylated on serine and threonine residues. Phosphorylation on Thr-411 and Thr-438 is required for CDC5L-mediated mRNA splicing. Has no effect on subcellular location nor on homodimerization. Phosphorylated in vitro by CDK2. Phosphorylation enhances interaction with PPP1R8.</text>
</comment>
<comment type="similarity">
    <text evidence="6">Belongs to the CEF1 family.</text>
</comment>
<sequence length="802" mass="92270">MPRIMIKGGVWRNTEDEILKAAVMKYGKNQWSRIASLLHRKSAKQCKARWYEWLDPSIKKTEWSREEEEKLLHLAKLMPTQWRTIAPIIGRTAAQCLEHYEFLLDKAAQRDNEEETTDDPRKLKPGEIDPNPETKPARPDPIDMDEDELEMLSEARARLANTQGKKAKRKAREKQLEEARRLAALQKRRELRAAGIEIQKKRKKKRGVDYNAEIPFEKKPALGFYDTSEENYQTLDADFRKLRQQDLDGELRSEKEGRDRKKDKQHLKRKKESDLPSAILQTSGVSEFTKKRSKLVLPAPQISDAELQEVVKVGQASEIARQTAEESGITNSASSTLLSEYNVTNNSIALRTPRTPASQDRILQEAQNLMALTNVDTPLKGGLNTPLHESDFSGVTPQRQVVQTPNTVLSTPFRTPSHGSEGLTPRSGTTPKPVINSTPGRTPLRDKLNINPEDGMADYSDPSYVKQMERESREHLRLGLLGLPAPKNDFEIVLPENAEKELEEREIDDTYIEDAADVDARKQAIRDAERVKEMKRMHKAVQKDLPRPSEVNETILRPLNVEPPLTDLQKSEELIKKEMITMLHYDLLHHPYEPSGNKKGKTVGFGTNNAEHIAYLEHNPYEKFSKEELKKAQDVLVQEMEVVKQGMSHGELSSEAYNQVWEECYSQVLYLPGQSRYTRANLASKKDRIESLEKRLEINRGHMTTEAKRAAKMEKKMKILLGGYQSRAMGLMKQLNDLWDQIEQAYLELRTFEELKKHEDSAIPRRLECLKEDVQRQQEREKELQHRYADLLLEKETLKAKF</sequence>
<accession>Q2KJC1</accession>
<gene>
    <name type="primary">CDC5L</name>
</gene>
<proteinExistence type="evidence at transcript level"/>
<organism>
    <name type="scientific">Bos taurus</name>
    <name type="common">Bovine</name>
    <dbReference type="NCBI Taxonomy" id="9913"/>
    <lineage>
        <taxon>Eukaryota</taxon>
        <taxon>Metazoa</taxon>
        <taxon>Chordata</taxon>
        <taxon>Craniata</taxon>
        <taxon>Vertebrata</taxon>
        <taxon>Euteleostomi</taxon>
        <taxon>Mammalia</taxon>
        <taxon>Eutheria</taxon>
        <taxon>Laurasiatheria</taxon>
        <taxon>Artiodactyla</taxon>
        <taxon>Ruminantia</taxon>
        <taxon>Pecora</taxon>
        <taxon>Bovidae</taxon>
        <taxon>Bovinae</taxon>
        <taxon>Bos</taxon>
    </lineage>
</organism>
<name>CDC5L_BOVIN</name>
<keyword id="KW-0010">Activator</keyword>
<keyword id="KW-0131">Cell cycle</keyword>
<keyword id="KW-0175">Coiled coil</keyword>
<keyword id="KW-0963">Cytoplasm</keyword>
<keyword id="KW-0227">DNA damage</keyword>
<keyword id="KW-0234">DNA repair</keyword>
<keyword id="KW-0238">DNA-binding</keyword>
<keyword id="KW-1017">Isopeptide bond</keyword>
<keyword id="KW-0507">mRNA processing</keyword>
<keyword id="KW-0508">mRNA splicing</keyword>
<keyword id="KW-0539">Nucleus</keyword>
<keyword id="KW-0597">Phosphoprotein</keyword>
<keyword id="KW-1185">Reference proteome</keyword>
<keyword id="KW-0677">Repeat</keyword>
<keyword id="KW-0694">RNA-binding</keyword>
<keyword id="KW-0747">Spliceosome</keyword>
<keyword id="KW-0804">Transcription</keyword>
<keyword id="KW-0805">Transcription regulation</keyword>
<keyword id="KW-0832">Ubl conjugation</keyword>
<feature type="chain" id="PRO_0000238915" description="Cell division cycle 5-like protein">
    <location>
        <begin position="1"/>
        <end position="802"/>
    </location>
</feature>
<feature type="domain" description="HTH myb-type 1" evidence="4">
    <location>
        <begin position="1"/>
        <end position="56"/>
    </location>
</feature>
<feature type="domain" description="HTH myb-type 2" evidence="4">
    <location>
        <begin position="57"/>
        <end position="108"/>
    </location>
</feature>
<feature type="DNA-binding region" description="H-T-H motif" evidence="4">
    <location>
        <begin position="31"/>
        <end position="54"/>
    </location>
</feature>
<feature type="DNA-binding region" description="H-T-H motif" evidence="4">
    <location>
        <begin position="82"/>
        <end position="104"/>
    </location>
</feature>
<feature type="region of interest" description="Disordered" evidence="5">
    <location>
        <begin position="108"/>
        <end position="143"/>
    </location>
</feature>
<feature type="region of interest" description="Required for interaction with CTNNBL1" evidence="2">
    <location>
        <begin position="200"/>
        <end position="206"/>
    </location>
</feature>
<feature type="region of interest" description="Disordered" evidence="5">
    <location>
        <begin position="246"/>
        <end position="278"/>
    </location>
</feature>
<feature type="region of interest" description="Interaction with PPP1R8" evidence="2">
    <location>
        <begin position="260"/>
        <end position="606"/>
    </location>
</feature>
<feature type="region of interest" description="Disordered" evidence="5">
    <location>
        <begin position="409"/>
        <end position="459"/>
    </location>
</feature>
<feature type="region of interest" description="Interaction with DAPK3" evidence="1">
    <location>
        <begin position="501"/>
        <end position="659"/>
    </location>
</feature>
<feature type="region of interest" description="Interaction with PLRG1" evidence="2">
    <location>
        <begin position="706"/>
        <end position="800"/>
    </location>
</feature>
<feature type="coiled-coil region" evidence="3">
    <location>
        <begin position="142"/>
        <end position="245"/>
    </location>
</feature>
<feature type="coiled-coil region" evidence="3">
    <location>
        <begin position="676"/>
        <end position="701"/>
    </location>
</feature>
<feature type="coiled-coil region" evidence="3">
    <location>
        <begin position="764"/>
        <end position="802"/>
    </location>
</feature>
<feature type="short sequence motif" description="Nuclear localization signal" evidence="3">
    <location>
        <begin position="165"/>
        <end position="271"/>
    </location>
</feature>
<feature type="compositionally biased region" description="Basic and acidic residues" evidence="5">
    <location>
        <begin position="118"/>
        <end position="127"/>
    </location>
</feature>
<feature type="compositionally biased region" description="Basic and acidic residues" evidence="5">
    <location>
        <begin position="246"/>
        <end position="262"/>
    </location>
</feature>
<feature type="compositionally biased region" description="Polar residues" evidence="5">
    <location>
        <begin position="409"/>
        <end position="418"/>
    </location>
</feature>
<feature type="compositionally biased region" description="Polar residues" evidence="5">
    <location>
        <begin position="426"/>
        <end position="440"/>
    </location>
</feature>
<feature type="modified residue" description="Phosphothreonine" evidence="2">
    <location>
        <position position="227"/>
    </location>
</feature>
<feature type="modified residue" description="Phosphoserine" evidence="2">
    <location>
        <position position="303"/>
    </location>
</feature>
<feature type="modified residue" description="Phosphoserine" evidence="2">
    <location>
        <position position="358"/>
    </location>
</feature>
<feature type="modified residue" description="Phosphothreonine" evidence="2">
    <location>
        <position position="377"/>
    </location>
</feature>
<feature type="modified residue" description="Phosphothreonine" evidence="2">
    <location>
        <position position="385"/>
    </location>
</feature>
<feature type="modified residue" description="Phosphothreonine" evidence="2">
    <location>
        <position position="396"/>
    </location>
</feature>
<feature type="modified residue" description="Phosphothreonine" evidence="2">
    <location>
        <position position="404"/>
    </location>
</feature>
<feature type="modified residue" description="Phosphothreonine" evidence="2">
    <location>
        <position position="411"/>
    </location>
</feature>
<feature type="modified residue" description="Phosphothreonine" evidence="2">
    <location>
        <position position="415"/>
    </location>
</feature>
<feature type="modified residue" description="Phosphoserine" evidence="2">
    <location>
        <position position="417"/>
    </location>
</feature>
<feature type="modified residue" description="Phosphothreonine" evidence="2">
    <location>
        <position position="424"/>
    </location>
</feature>
<feature type="modified residue" description="Phosphothreonine" evidence="2">
    <location>
        <position position="430"/>
    </location>
</feature>
<feature type="modified residue" description="Phosphoserine" evidence="2">
    <location>
        <position position="437"/>
    </location>
</feature>
<feature type="modified residue" description="Phosphothreonine" evidence="2">
    <location>
        <position position="438"/>
    </location>
</feature>
<feature type="modified residue" description="Phosphothreonine" evidence="2">
    <location>
        <position position="442"/>
    </location>
</feature>
<feature type="cross-link" description="Glycyl lysine isopeptide (Lys-Gly) (interchain with G-Cter in SUMO2)" evidence="2">
    <location>
        <position position="135"/>
    </location>
</feature>
<feature type="cross-link" description="Glycyl lysine isopeptide (Lys-Gly) (interchain with G-Cter in SUMO2)" evidence="2">
    <location>
        <position position="219"/>
    </location>
</feature>
<feature type="cross-link" description="Glycyl lysine isopeptide (Lys-Gly) (interchain with G-Cter in SUMO2)" evidence="2">
    <location>
        <position position="487"/>
    </location>
</feature>
<protein>
    <recommendedName>
        <fullName>Cell division cycle 5-like protein</fullName>
        <shortName>Cdc5-like protein</shortName>
    </recommendedName>
</protein>
<reference key="1">
    <citation type="submission" date="2005-09" db="EMBL/GenBank/DDBJ databases">
        <authorList>
            <consortium name="NIH - Mammalian Gene Collection (MGC) project"/>
        </authorList>
    </citation>
    <scope>NUCLEOTIDE SEQUENCE [LARGE SCALE MRNA]</scope>
    <source>
        <strain>Hereford</strain>
        <tissue>Hypothalamus</tissue>
    </source>
</reference>
<dbReference type="EMBL" id="BC105417">
    <property type="protein sequence ID" value="AAI05418.1"/>
    <property type="molecule type" value="mRNA"/>
</dbReference>
<dbReference type="RefSeq" id="NP_001070010.1">
    <property type="nucleotide sequence ID" value="NM_001076542.1"/>
</dbReference>
<dbReference type="BMRB" id="Q2KJC1"/>
<dbReference type="SMR" id="Q2KJC1"/>
<dbReference type="FunCoup" id="Q2KJC1">
    <property type="interactions" value="4571"/>
</dbReference>
<dbReference type="STRING" id="9913.ENSBTAP00000026654"/>
<dbReference type="PaxDb" id="9913-ENSBTAP00000026654"/>
<dbReference type="Ensembl" id="ENSBTAT00000101859.1">
    <property type="protein sequence ID" value="ENSBTAP00000076601.1"/>
    <property type="gene ID" value="ENSBTAG00000020012.7"/>
</dbReference>
<dbReference type="GeneID" id="767817"/>
<dbReference type="KEGG" id="bta:767817"/>
<dbReference type="CTD" id="988"/>
<dbReference type="VEuPathDB" id="HostDB:ENSBTAG00000020012"/>
<dbReference type="VGNC" id="VGNC:27080">
    <property type="gene designation" value="CDC5L"/>
</dbReference>
<dbReference type="eggNOG" id="KOG0050">
    <property type="taxonomic scope" value="Eukaryota"/>
</dbReference>
<dbReference type="GeneTree" id="ENSGT00550000074922"/>
<dbReference type="HOGENOM" id="CLU_009082_0_0_1"/>
<dbReference type="InParanoid" id="Q2KJC1"/>
<dbReference type="OMA" id="KMGMAGE"/>
<dbReference type="OrthoDB" id="1410009at2759"/>
<dbReference type="TreeFam" id="TF101061"/>
<dbReference type="Reactome" id="R-BTA-72163">
    <property type="pathway name" value="mRNA Splicing - Major Pathway"/>
</dbReference>
<dbReference type="Proteomes" id="UP000009136">
    <property type="component" value="Chromosome 23"/>
</dbReference>
<dbReference type="Bgee" id="ENSBTAG00000020012">
    <property type="expression patterns" value="Expressed in oocyte and 111 other cell types or tissues"/>
</dbReference>
<dbReference type="GO" id="GO:0005737">
    <property type="term" value="C:cytoplasm"/>
    <property type="evidence" value="ECO:0007669"/>
    <property type="project" value="UniProtKB-SubCell"/>
</dbReference>
<dbReference type="GO" id="GO:0005662">
    <property type="term" value="C:DNA replication factor A complex"/>
    <property type="evidence" value="ECO:0007669"/>
    <property type="project" value="Ensembl"/>
</dbReference>
<dbReference type="GO" id="GO:0016607">
    <property type="term" value="C:nuclear speck"/>
    <property type="evidence" value="ECO:0007669"/>
    <property type="project" value="UniProtKB-SubCell"/>
</dbReference>
<dbReference type="GO" id="GO:0005634">
    <property type="term" value="C:nucleus"/>
    <property type="evidence" value="ECO:0000250"/>
    <property type="project" value="UniProtKB"/>
</dbReference>
<dbReference type="GO" id="GO:0000974">
    <property type="term" value="C:Prp19 complex"/>
    <property type="evidence" value="ECO:0000250"/>
    <property type="project" value="UniProtKB"/>
</dbReference>
<dbReference type="GO" id="GO:0005681">
    <property type="term" value="C:spliceosomal complex"/>
    <property type="evidence" value="ECO:0000318"/>
    <property type="project" value="GO_Central"/>
</dbReference>
<dbReference type="GO" id="GO:0071007">
    <property type="term" value="C:U2-type catalytic step 2 spliceosome"/>
    <property type="evidence" value="ECO:0000250"/>
    <property type="project" value="UniProtKB"/>
</dbReference>
<dbReference type="GO" id="GO:0001228">
    <property type="term" value="F:DNA-binding transcription activator activity, RNA polymerase II-specific"/>
    <property type="evidence" value="ECO:0007669"/>
    <property type="project" value="Ensembl"/>
</dbReference>
<dbReference type="GO" id="GO:0000981">
    <property type="term" value="F:DNA-binding transcription factor activity, RNA polymerase II-specific"/>
    <property type="evidence" value="ECO:0000318"/>
    <property type="project" value="GO_Central"/>
</dbReference>
<dbReference type="GO" id="GO:0042802">
    <property type="term" value="F:identical protein binding"/>
    <property type="evidence" value="ECO:0007669"/>
    <property type="project" value="Ensembl"/>
</dbReference>
<dbReference type="GO" id="GO:0003723">
    <property type="term" value="F:RNA binding"/>
    <property type="evidence" value="ECO:0007669"/>
    <property type="project" value="UniProtKB-KW"/>
</dbReference>
<dbReference type="GO" id="GO:0000977">
    <property type="term" value="F:RNA polymerase II transcription regulatory region sequence-specific DNA binding"/>
    <property type="evidence" value="ECO:0000318"/>
    <property type="project" value="GO_Central"/>
</dbReference>
<dbReference type="GO" id="GO:0071987">
    <property type="term" value="F:WD40-repeat domain binding"/>
    <property type="evidence" value="ECO:0000250"/>
    <property type="project" value="UniProtKB"/>
</dbReference>
<dbReference type="GO" id="GO:0000077">
    <property type="term" value="P:DNA damage checkpoint signaling"/>
    <property type="evidence" value="ECO:0000250"/>
    <property type="project" value="UniProtKB"/>
</dbReference>
<dbReference type="GO" id="GO:0006281">
    <property type="term" value="P:DNA repair"/>
    <property type="evidence" value="ECO:0007669"/>
    <property type="project" value="UniProtKB-KW"/>
</dbReference>
<dbReference type="GO" id="GO:0000398">
    <property type="term" value="P:mRNA splicing, via spliceosome"/>
    <property type="evidence" value="ECO:0000250"/>
    <property type="project" value="UniProtKB"/>
</dbReference>
<dbReference type="GO" id="GO:0006357">
    <property type="term" value="P:regulation of transcription by RNA polymerase II"/>
    <property type="evidence" value="ECO:0000318"/>
    <property type="project" value="GO_Central"/>
</dbReference>
<dbReference type="CDD" id="cd00167">
    <property type="entry name" value="SANT"/>
    <property type="match status" value="1"/>
</dbReference>
<dbReference type="CDD" id="cd11659">
    <property type="entry name" value="SANT_CDC5_II"/>
    <property type="match status" value="1"/>
</dbReference>
<dbReference type="FunFam" id="1.10.10.60:FF:000021">
    <property type="entry name" value="CDC5 cell division cycle 5-like"/>
    <property type="match status" value="1"/>
</dbReference>
<dbReference type="FunFam" id="1.10.10.60:FF:000091">
    <property type="entry name" value="CDC5 cell division cycle 5-like"/>
    <property type="match status" value="1"/>
</dbReference>
<dbReference type="Gene3D" id="1.10.10.60">
    <property type="entry name" value="Homeodomain-like"/>
    <property type="match status" value="2"/>
</dbReference>
<dbReference type="InterPro" id="IPR047242">
    <property type="entry name" value="CDC5L/Cef1"/>
</dbReference>
<dbReference type="InterPro" id="IPR021786">
    <property type="entry name" value="Cdc5p/Cef1_C"/>
</dbReference>
<dbReference type="InterPro" id="IPR009057">
    <property type="entry name" value="Homeodomain-like_sf"/>
</dbReference>
<dbReference type="InterPro" id="IPR017930">
    <property type="entry name" value="Myb_dom"/>
</dbReference>
<dbReference type="InterPro" id="IPR001005">
    <property type="entry name" value="SANT/Myb"/>
</dbReference>
<dbReference type="InterPro" id="IPR047240">
    <property type="entry name" value="SANT_CDC5L_II"/>
</dbReference>
<dbReference type="PANTHER" id="PTHR45885">
    <property type="entry name" value="CELL DIVISION CYCLE 5-LIKE PROTEIN"/>
    <property type="match status" value="1"/>
</dbReference>
<dbReference type="PANTHER" id="PTHR45885:SF1">
    <property type="entry name" value="CELL DIVISION CYCLE 5-LIKE PROTEIN"/>
    <property type="match status" value="1"/>
</dbReference>
<dbReference type="Pfam" id="PF11831">
    <property type="entry name" value="Myb_Cef"/>
    <property type="match status" value="1"/>
</dbReference>
<dbReference type="Pfam" id="PF13921">
    <property type="entry name" value="Myb_DNA-bind_6"/>
    <property type="match status" value="1"/>
</dbReference>
<dbReference type="SMART" id="SM00717">
    <property type="entry name" value="SANT"/>
    <property type="match status" value="2"/>
</dbReference>
<dbReference type="SUPFAM" id="SSF46689">
    <property type="entry name" value="Homeodomain-like"/>
    <property type="match status" value="1"/>
</dbReference>
<dbReference type="PROSITE" id="PS51294">
    <property type="entry name" value="HTH_MYB"/>
    <property type="match status" value="2"/>
</dbReference>
<evidence type="ECO:0000250" key="1">
    <source>
        <dbReference type="UniProtKB" id="O08837"/>
    </source>
</evidence>
<evidence type="ECO:0000250" key="2">
    <source>
        <dbReference type="UniProtKB" id="Q99459"/>
    </source>
</evidence>
<evidence type="ECO:0000255" key="3"/>
<evidence type="ECO:0000255" key="4">
    <source>
        <dbReference type="PROSITE-ProRule" id="PRU00625"/>
    </source>
</evidence>
<evidence type="ECO:0000256" key="5">
    <source>
        <dbReference type="SAM" id="MobiDB-lite"/>
    </source>
</evidence>
<evidence type="ECO:0000305" key="6"/>